<keyword id="KW-0025">Alternative splicing</keyword>
<keyword id="KW-1003">Cell membrane</keyword>
<keyword id="KW-0157">Chromophore</keyword>
<keyword id="KW-1015">Disulfide bond</keyword>
<keyword id="KW-0297">G-protein coupled receptor</keyword>
<keyword id="KW-0325">Glycoprotein</keyword>
<keyword id="KW-0449">Lipoprotein</keyword>
<keyword id="KW-0472">Membrane</keyword>
<keyword id="KW-0564">Palmitate</keyword>
<keyword id="KW-0600">Photoreceptor protein</keyword>
<keyword id="KW-0675">Receptor</keyword>
<keyword id="KW-1185">Reference proteome</keyword>
<keyword id="KW-0681">Retinal protein</keyword>
<keyword id="KW-0716">Sensory transduction</keyword>
<keyword id="KW-0807">Transducer</keyword>
<keyword id="KW-0812">Transmembrane</keyword>
<keyword id="KW-1133">Transmembrane helix</keyword>
<keyword id="KW-0844">Vision</keyword>
<evidence type="ECO:0000255" key="1"/>
<evidence type="ECO:0000255" key="2">
    <source>
        <dbReference type="PROSITE-ProRule" id="PRU00521"/>
    </source>
</evidence>
<evidence type="ECO:0000256" key="3">
    <source>
        <dbReference type="SAM" id="MobiDB-lite"/>
    </source>
</evidence>
<evidence type="ECO:0000269" key="4">
    <source>
    </source>
</evidence>
<evidence type="ECO:0000269" key="5">
    <source>
    </source>
</evidence>
<evidence type="ECO:0000269" key="6">
    <source>
    </source>
</evidence>
<evidence type="ECO:0000269" key="7">
    <source>
    </source>
</evidence>
<evidence type="ECO:0000269" key="8">
    <source>
    </source>
</evidence>
<evidence type="ECO:0000269" key="9">
    <source>
    </source>
</evidence>
<evidence type="ECO:0000303" key="10">
    <source>
    </source>
</evidence>
<evidence type="ECO:0000305" key="11"/>
<protein>
    <recommendedName>
        <fullName>Opsin-5</fullName>
    </recommendedName>
    <alternativeName>
        <fullName>G-protein coupled receptor 136</fullName>
    </alternativeName>
    <alternativeName>
        <fullName>G-protein coupled receptor PGR12</fullName>
    </alternativeName>
    <alternativeName>
        <fullName>Neuropsin</fullName>
    </alternativeName>
</protein>
<name>OPN5_MOUSE</name>
<proteinExistence type="evidence at protein level"/>
<gene>
    <name type="primary">Opn5</name>
    <name type="synonym">Gpr136</name>
    <name type="synonym">Pgr12</name>
</gene>
<organism>
    <name type="scientific">Mus musculus</name>
    <name type="common">Mouse</name>
    <dbReference type="NCBI Taxonomy" id="10090"/>
    <lineage>
        <taxon>Eukaryota</taxon>
        <taxon>Metazoa</taxon>
        <taxon>Chordata</taxon>
        <taxon>Craniata</taxon>
        <taxon>Vertebrata</taxon>
        <taxon>Euteleostomi</taxon>
        <taxon>Mammalia</taxon>
        <taxon>Eutheria</taxon>
        <taxon>Euarchontoglires</taxon>
        <taxon>Glires</taxon>
        <taxon>Rodentia</taxon>
        <taxon>Myomorpha</taxon>
        <taxon>Muroidea</taxon>
        <taxon>Muridae</taxon>
        <taxon>Murinae</taxon>
        <taxon>Mus</taxon>
        <taxon>Mus</taxon>
    </lineage>
</organism>
<sequence length="377" mass="42018">MALNHTALPQDERLPHYLRDEDPFASKLSWEADLVAGFYLTIIGILSTFGNGYVLYMSSRRKKKLRPAEIMTINLAVCDLGISVVGKPFTIISCFCHRWVFGWFGCRWYGWAGFFFGCGSLITMTAVSLDRYLKICYLSYGVWLKRKHAYICLAVIWAYASFWTTMPLVGLGDYAPEPFGTSCTLDWWLAQASGGGQVFILSILFFCLLLPTAVIVFSYAKIIAKVKSSSKEVAHFDSRIHSSHVLEVKLTKVAMLICAGFLIAWIPYAVVSVWSAFGRPDSIPIQLSVVPTLLAKSAAMYNPIIYQVIDYRFACCQAGGLRGTKKKSLEDFRLHTVTAVRKSSAVLEIHPESSSRFTSAHVMDGESHSNDGDCGKK</sequence>
<comment type="function">
    <text evidence="5 6 7 8 9">G-protein coupled receptor which selectively activates G(i) type G proteins via ultraviolet A (UVA) light-mediated activation in the retina (PubMed:22043319). Preferentially binds the chromophore 11-cis retinal and is a bistable protein that displays emission peaks at 380 nm (UVA light) and 470 nm (blue light) (PubMed:22043319, PubMed:31607531). Required for the light-response in the inner plexiform layer, and contributes to the regulation of the light-response in the nerve fiber layer, via phosphorylated DAT/SLC6A3 dopamine uptake (PubMed:30936473). Involved in local corneal and retinal circadian rhythm photoentrainment via modulation of the UVA light-induced phase-shift of the retina clock (PubMed:26392540, PubMed:30240620). Acts as a circadian photoreceptor in the outer ear and vibrissal pads, via modulation of circadian clock-gene expression in response to violet light during the light-to-dark transition phase and night phase of the circadian cycle (PubMed:31607531). Required in the retina to negatively regulate hyaloid vessel regression during postnatal development via light-dependent OPN5-SLC32A1-DRD2-VEGFR2 signaling (PubMed:30936473). Involved in the light-dependent regulation of retina and vitreous compartment dopamine levels (PubMed:30936473).</text>
</comment>
<comment type="subcellular location">
    <subcellularLocation>
        <location evidence="11">Cell membrane</location>
        <topology evidence="1">Multi-pass membrane protein</topology>
    </subcellularLocation>
</comment>
<comment type="alternative products">
    <event type="alternative splicing"/>
    <isoform>
        <id>Q6VZZ7-1</id>
        <name>1</name>
        <sequence type="displayed"/>
    </isoform>
    <isoform>
        <id>Q6VZZ7-2</id>
        <name>2</name>
        <sequence type="described" ref="VSP_014041 VSP_014042"/>
    </isoform>
</comment>
<comment type="tissue specificity">
    <text evidence="4 5 6 7 9">Expressed in the brain (at protein level) (PubMed:14623103, PubMed:22043319). Weakly expressed in the skin and liver (at protein level) (PubMed:22043319). Abundantly expressed in striated muscle cells (PubMed:22043319). Expressed in Math7/Atok7-dependent retinal ganglion cells in the ganglion cell layer (at protein level) (PubMed:14623103, PubMed:22043319, PubMed:26392540, PubMed:30240620, PubMed:31607531). Additionally expressed in horizontal and amacrine cells in the inner nuclear layer of the retina (at protein level) (PubMed:22043319). Expressed around the base of hair follicles and in epidermal and sebaceous gland cells of the outer ear (at protein level) (PubMed:22043319, PubMed:31607531). Abundantly expressed in vibrissae hair follicles and weakly expressed in the vibrissae skin pad, dorsal back skin, and tail (PubMed:31607531).</text>
</comment>
<comment type="developmental stage">
    <text evidence="8 9">Expressed weakly in the inner retina at postnatal day 5 (P5), with expression becoming abundant in retinal ganglion cells at P8 (PubMed:30936473). Expressed throughout the retinal sublaminae layers, with abundant expression in the ganglion cell layer and nerve fiber layer at P12 (PubMed:30936473). Expressed in ganglion cells in the optic tracts, superior colliculus and lateral geniculate nucleus of the brain at P28 (PubMed:30936473). Expressed around the base of hair follicles in the dorsal ear skin, in the vibrissal nose pad, and weakly expressed below the epidermis in the vibrissal nose pad at P8 (PubMed:31607531).</text>
</comment>
<comment type="PTM">
    <text evidence="11">It is uncertain whether Cys-315 or Cys-316 is palmitoylated.</text>
</comment>
<comment type="disruption phenotype">
    <text evidence="6 7 8 9">Ultrastructure of the retina is normal (PubMed:26392540, PubMed:30240620, PubMed:30936473). Newborn mice show normal hyaloid vessel numbers and normal vessel cellularity (PubMed:30936473). Retinas show normal expression patterns of rod and cone opsins including Opn4 (PubMed:26392540, PubMed:30240620). Decreased activated Vegfr2 in the hyaloid vessels and increased activated Akt1 at P5 (PubMed:30936473). Reduced levels of dopamine in the retina, however increased levels in the vitreous at P6 (PubMed:30936473). Reduced number of hyaloid blood vessels due to precocious regression, however no change in abundance of Vegfa or Flt1 at P8 (PubMed:30936473). Expression of tyrosine hydroxylase Th in retinal cell processes at P8, with increased expression in developed dopaminergic amacrine cells at P15 (PubMed:30936473). Loss of retinal and corneal circadian rhythm photoentrainment (PubMed:26392540, PubMed:30240620). Reduced UVA-induced phase-shift response and Fos expression in the suprachiasmatic nuclei (SCN) in the brain (PubMed:30240620). Abolishes retinaldehyde-dependent photoentrainment in the dermal tissues of the outer ear and vibrissal pad (PubMed:31607531). Loss of phase shifting activity in response to violet light and expression of circadian clock-genes in the skin of the outer ear during light-to-dark cycle, including Per1, Per2, Cry2, Dbp and Nr1d2 (PubMed:31607531). Pde6b and Opn5 double knockout mice also show loss of retinal ultrastructures and a more severe reduction in the rate of circadian photoentrainment, light-induced phase-shift response and Fos expression in the SCN (PubMed:30240620).</text>
</comment>
<comment type="similarity">
    <text evidence="2">Belongs to the G-protein coupled receptor 1 family. Opsin subfamily.</text>
</comment>
<reference key="1">
    <citation type="journal article" date="2003" name="FEBS Lett.">
        <title>Seven evolutionarily conserved human rhodopsin G protein-coupled receptors lacking close relatives.</title>
        <authorList>
            <person name="Fredriksson R."/>
            <person name="Hoeglund P.J."/>
            <person name="Gloriam D.E.I."/>
            <person name="Lagerstroem M.C."/>
            <person name="Schioeth H.B."/>
        </authorList>
    </citation>
    <scope>NUCLEOTIDE SEQUENCE [MRNA] (ISOFORM 2)</scope>
</reference>
<reference key="2">
    <citation type="journal article" date="2004" name="Genome Res.">
        <title>The status, quality, and expansion of the NIH full-length cDNA project: the Mammalian Gene Collection (MGC).</title>
        <authorList>
            <consortium name="The MGC Project Team"/>
        </authorList>
    </citation>
    <scope>NUCLEOTIDE SEQUENCE [LARGE SCALE MRNA] (ISOFORM 1)</scope>
    <source>
        <tissue>Brain</tissue>
    </source>
</reference>
<reference key="3">
    <citation type="journal article" date="2003" name="Proc. Natl. Acad. Sci. U.S.A.">
        <title>The G protein-coupled receptor repertoires of human and mouse.</title>
        <authorList>
            <person name="Vassilatis D.K."/>
            <person name="Hohmann J.G."/>
            <person name="Zeng H."/>
            <person name="Li F."/>
            <person name="Ranchalis J.E."/>
            <person name="Mortrud M.T."/>
            <person name="Brown A."/>
            <person name="Rodriguez S.S."/>
            <person name="Weller J.R."/>
            <person name="Wright A.C."/>
            <person name="Bergmann J.E."/>
            <person name="Gaitanaris G.A."/>
        </authorList>
    </citation>
    <scope>NUCLEOTIDE SEQUENCE [LARGE SCALE MRNA] OF 154-228</scope>
</reference>
<reference key="4">
    <citation type="journal article" date="2005" name="Science">
        <title>The transcriptional landscape of the mammalian genome.</title>
        <authorList>
            <person name="Carninci P."/>
            <person name="Kasukawa T."/>
            <person name="Katayama S."/>
            <person name="Gough J."/>
            <person name="Frith M.C."/>
            <person name="Maeda N."/>
            <person name="Oyama R."/>
            <person name="Ravasi T."/>
            <person name="Lenhard B."/>
            <person name="Wells C."/>
            <person name="Kodzius R."/>
            <person name="Shimokawa K."/>
            <person name="Bajic V.B."/>
            <person name="Brenner S.E."/>
            <person name="Batalov S."/>
            <person name="Forrest A.R."/>
            <person name="Zavolan M."/>
            <person name="Davis M.J."/>
            <person name="Wilming L.G."/>
            <person name="Aidinis V."/>
            <person name="Allen J.E."/>
            <person name="Ambesi-Impiombato A."/>
            <person name="Apweiler R."/>
            <person name="Aturaliya R.N."/>
            <person name="Bailey T.L."/>
            <person name="Bansal M."/>
            <person name="Baxter L."/>
            <person name="Beisel K.W."/>
            <person name="Bersano T."/>
            <person name="Bono H."/>
            <person name="Chalk A.M."/>
            <person name="Chiu K.P."/>
            <person name="Choudhary V."/>
            <person name="Christoffels A."/>
            <person name="Clutterbuck D.R."/>
            <person name="Crowe M.L."/>
            <person name="Dalla E."/>
            <person name="Dalrymple B.P."/>
            <person name="de Bono B."/>
            <person name="Della Gatta G."/>
            <person name="di Bernardo D."/>
            <person name="Down T."/>
            <person name="Engstrom P."/>
            <person name="Fagiolini M."/>
            <person name="Faulkner G."/>
            <person name="Fletcher C.F."/>
            <person name="Fukushima T."/>
            <person name="Furuno M."/>
            <person name="Futaki S."/>
            <person name="Gariboldi M."/>
            <person name="Georgii-Hemming P."/>
            <person name="Gingeras T.R."/>
            <person name="Gojobori T."/>
            <person name="Green R.E."/>
            <person name="Gustincich S."/>
            <person name="Harbers M."/>
            <person name="Hayashi Y."/>
            <person name="Hensch T.K."/>
            <person name="Hirokawa N."/>
            <person name="Hill D."/>
            <person name="Huminiecki L."/>
            <person name="Iacono M."/>
            <person name="Ikeo K."/>
            <person name="Iwama A."/>
            <person name="Ishikawa T."/>
            <person name="Jakt M."/>
            <person name="Kanapin A."/>
            <person name="Katoh M."/>
            <person name="Kawasawa Y."/>
            <person name="Kelso J."/>
            <person name="Kitamura H."/>
            <person name="Kitano H."/>
            <person name="Kollias G."/>
            <person name="Krishnan S.P."/>
            <person name="Kruger A."/>
            <person name="Kummerfeld S.K."/>
            <person name="Kurochkin I.V."/>
            <person name="Lareau L.F."/>
            <person name="Lazarevic D."/>
            <person name="Lipovich L."/>
            <person name="Liu J."/>
            <person name="Liuni S."/>
            <person name="McWilliam S."/>
            <person name="Madan Babu M."/>
            <person name="Madera M."/>
            <person name="Marchionni L."/>
            <person name="Matsuda H."/>
            <person name="Matsuzawa S."/>
            <person name="Miki H."/>
            <person name="Mignone F."/>
            <person name="Miyake S."/>
            <person name="Morris K."/>
            <person name="Mottagui-Tabar S."/>
            <person name="Mulder N."/>
            <person name="Nakano N."/>
            <person name="Nakauchi H."/>
            <person name="Ng P."/>
            <person name="Nilsson R."/>
            <person name="Nishiguchi S."/>
            <person name="Nishikawa S."/>
            <person name="Nori F."/>
            <person name="Ohara O."/>
            <person name="Okazaki Y."/>
            <person name="Orlando V."/>
            <person name="Pang K.C."/>
            <person name="Pavan W.J."/>
            <person name="Pavesi G."/>
            <person name="Pesole G."/>
            <person name="Petrovsky N."/>
            <person name="Piazza S."/>
            <person name="Reed J."/>
            <person name="Reid J.F."/>
            <person name="Ring B.Z."/>
            <person name="Ringwald M."/>
            <person name="Rost B."/>
            <person name="Ruan Y."/>
            <person name="Salzberg S.L."/>
            <person name="Sandelin A."/>
            <person name="Schneider C."/>
            <person name="Schoenbach C."/>
            <person name="Sekiguchi K."/>
            <person name="Semple C.A."/>
            <person name="Seno S."/>
            <person name="Sessa L."/>
            <person name="Sheng Y."/>
            <person name="Shibata Y."/>
            <person name="Shimada H."/>
            <person name="Shimada K."/>
            <person name="Silva D."/>
            <person name="Sinclair B."/>
            <person name="Sperling S."/>
            <person name="Stupka E."/>
            <person name="Sugiura K."/>
            <person name="Sultana R."/>
            <person name="Takenaka Y."/>
            <person name="Taki K."/>
            <person name="Tammoja K."/>
            <person name="Tan S.L."/>
            <person name="Tang S."/>
            <person name="Taylor M.S."/>
            <person name="Tegner J."/>
            <person name="Teichmann S.A."/>
            <person name="Ueda H.R."/>
            <person name="van Nimwegen E."/>
            <person name="Verardo R."/>
            <person name="Wei C.L."/>
            <person name="Yagi K."/>
            <person name="Yamanishi H."/>
            <person name="Zabarovsky E."/>
            <person name="Zhu S."/>
            <person name="Zimmer A."/>
            <person name="Hide W."/>
            <person name="Bult C."/>
            <person name="Grimmond S.M."/>
            <person name="Teasdale R.D."/>
            <person name="Liu E.T."/>
            <person name="Brusic V."/>
            <person name="Quackenbush J."/>
            <person name="Wahlestedt C."/>
            <person name="Mattick J.S."/>
            <person name="Hume D.A."/>
            <person name="Kai C."/>
            <person name="Sasaki D."/>
            <person name="Tomaru Y."/>
            <person name="Fukuda S."/>
            <person name="Kanamori-Katayama M."/>
            <person name="Suzuki M."/>
            <person name="Aoki J."/>
            <person name="Arakawa T."/>
            <person name="Iida J."/>
            <person name="Imamura K."/>
            <person name="Itoh M."/>
            <person name="Kato T."/>
            <person name="Kawaji H."/>
            <person name="Kawagashira N."/>
            <person name="Kawashima T."/>
            <person name="Kojima M."/>
            <person name="Kondo S."/>
            <person name="Konno H."/>
            <person name="Nakano K."/>
            <person name="Ninomiya N."/>
            <person name="Nishio T."/>
            <person name="Okada M."/>
            <person name="Plessy C."/>
            <person name="Shibata K."/>
            <person name="Shiraki T."/>
            <person name="Suzuki S."/>
            <person name="Tagami M."/>
            <person name="Waki K."/>
            <person name="Watahiki A."/>
            <person name="Okamura-Oho Y."/>
            <person name="Suzuki H."/>
            <person name="Kawai J."/>
            <person name="Hayashizaki Y."/>
        </authorList>
    </citation>
    <scope>NUCLEOTIDE SEQUENCE [LARGE SCALE MRNA] OF 270-377 (ISOFORM 1)</scope>
    <source>
        <strain>C57BL/6J</strain>
        <tissue>Spinal cord</tissue>
    </source>
</reference>
<reference key="5">
    <citation type="journal article" date="2003" name="FEBS Lett.">
        <title>Neuropsin (Opn5): a novel opsin identified in mammalian neural tissue.</title>
        <authorList>
            <person name="Tarttelin E.E."/>
            <person name="Bellingham J."/>
            <person name="Hankins M.W."/>
            <person name="Foster R.G."/>
            <person name="Lucas R.J."/>
        </authorList>
    </citation>
    <scope>IDENTIFICATION (ISOFORM 1)</scope>
    <scope>TISSUE SPECIFICITY</scope>
    <source>
        <strain>C3H/HeJ</strain>
    </source>
</reference>
<reference key="6">
    <citation type="journal article" date="2011" name="PLoS ONE">
        <title>UV-sensitive photoreceptor protein OPN5 in humans and mice.</title>
        <authorList>
            <person name="Kojima D."/>
            <person name="Mori S."/>
            <person name="Torii M."/>
            <person name="Wada A."/>
            <person name="Morishita R."/>
            <person name="Fukada Y."/>
        </authorList>
    </citation>
    <scope>FUNCTION</scope>
    <scope>TISSUE SPECIFICITY</scope>
</reference>
<reference key="7">
    <citation type="journal article" date="2015" name="Proc. Natl. Acad. Sci. U.S.A.">
        <title>Neuropsin (OPN5)-mediated photoentrainment of local circadian oscillators in mammalian retina and cornea.</title>
        <authorList>
            <person name="Buhr E.D."/>
            <person name="Yue W.W."/>
            <person name="Ren X."/>
            <person name="Jiang Z."/>
            <person name="Liao H.W."/>
            <person name="Mei X."/>
            <person name="Vemaraju S."/>
            <person name="Nguyen M.T."/>
            <person name="Reed R.R."/>
            <person name="Lang R.A."/>
            <person name="Yau K.W."/>
            <person name="Van Gelder R.N."/>
        </authorList>
    </citation>
    <scope>FUNCTION</scope>
    <scope>TISSUE SPECIFICITY</scope>
    <scope>DISRUPTION PHENOTYPE</scope>
</reference>
<reference key="8">
    <citation type="journal article" date="2018" name="IScience">
        <title>Impaired Circadian Photoentrainment in Opn5-Null Mice.</title>
        <authorList>
            <person name="Ota W."/>
            <person name="Nakane Y."/>
            <person name="Hattar S."/>
            <person name="Yoshimura T."/>
        </authorList>
    </citation>
    <scope>FUNCTION</scope>
    <scope>TISSUE SPECIFICITY</scope>
    <scope>DISRUPTION PHENOTYPE</scope>
</reference>
<reference key="9">
    <citation type="journal article" date="2019" name="Curr. Biol.">
        <title>Neuropsin (OPN5) Mediates Local Light-Dependent Induction of Circadian Clock Genes and Circadian Photoentrainment in Exposed Murine Skin.</title>
        <authorList>
            <person name="Buhr E.D."/>
            <person name="Vemaraju S."/>
            <person name="Diaz N."/>
            <person name="Lang R.A."/>
            <person name="Van Gelder R.N."/>
        </authorList>
    </citation>
    <scope>FUNCTION</scope>
    <scope>TISSUE SPECIFICITY</scope>
    <scope>DEVELOPMENTAL STAGE</scope>
    <scope>DISRUPTION PHENOTYPE</scope>
</reference>
<reference key="10">
    <citation type="journal article" date="2019" name="Nat. Cell Biol.">
        <title>An opsin 5-dopamine pathway mediates light-dependent vascular development in the eye.</title>
        <authorList>
            <person name="Nguyen M.T."/>
            <person name="Vemaraju S."/>
            <person name="Nayak G."/>
            <person name="Odaka Y."/>
            <person name="Buhr E.D."/>
            <person name="Alonzo N."/>
            <person name="Tran U."/>
            <person name="Batie M."/>
            <person name="Upton B.A."/>
            <person name="Darvas M."/>
            <person name="Kozmik Z."/>
            <person name="Rao S."/>
            <person name="Hegde R.S."/>
            <person name="Iuvone P.M."/>
            <person name="Van Gelder R.N."/>
            <person name="Lang R.A."/>
        </authorList>
    </citation>
    <scope>FUNCTION</scope>
    <scope>DEVELOPMENTAL STAGE</scope>
    <scope>DISRUPTION PHENOTYPE</scope>
</reference>
<feature type="chain" id="PRO_0000197818" description="Opsin-5">
    <location>
        <begin position="1"/>
        <end position="377"/>
    </location>
</feature>
<feature type="topological domain" description="Extracellular" evidence="1">
    <location>
        <begin position="1"/>
        <end position="33"/>
    </location>
</feature>
<feature type="transmembrane region" description="Helical; Name=1" evidence="1">
    <location>
        <begin position="34"/>
        <end position="54"/>
    </location>
</feature>
<feature type="topological domain" description="Cytoplasmic" evidence="1">
    <location>
        <begin position="55"/>
        <end position="74"/>
    </location>
</feature>
<feature type="transmembrane region" description="Helical; Name=2" evidence="1">
    <location>
        <begin position="75"/>
        <end position="95"/>
    </location>
</feature>
<feature type="topological domain" description="Extracellular" evidence="1">
    <location>
        <begin position="96"/>
        <end position="108"/>
    </location>
</feature>
<feature type="transmembrane region" description="Helical; Name=3" evidence="1">
    <location>
        <begin position="109"/>
        <end position="129"/>
    </location>
</feature>
<feature type="topological domain" description="Cytoplasmic" evidence="1">
    <location>
        <begin position="130"/>
        <end position="150"/>
    </location>
</feature>
<feature type="transmembrane region" description="Helical; Name=4" evidence="1">
    <location>
        <begin position="151"/>
        <end position="171"/>
    </location>
</feature>
<feature type="topological domain" description="Extracellular" evidence="1">
    <location>
        <begin position="172"/>
        <end position="197"/>
    </location>
</feature>
<feature type="transmembrane region" description="Helical; Name=5" evidence="1">
    <location>
        <begin position="198"/>
        <end position="218"/>
    </location>
</feature>
<feature type="topological domain" description="Cytoplasmic" evidence="1">
    <location>
        <begin position="219"/>
        <end position="252"/>
    </location>
</feature>
<feature type="transmembrane region" description="Helical; Name=6" evidence="1">
    <location>
        <begin position="253"/>
        <end position="273"/>
    </location>
</feature>
<feature type="topological domain" description="Extracellular" evidence="1">
    <location>
        <begin position="274"/>
        <end position="288"/>
    </location>
</feature>
<feature type="transmembrane region" description="Helical; Name=7" evidence="1">
    <location>
        <begin position="289"/>
        <end position="309"/>
    </location>
</feature>
<feature type="topological domain" description="Cytoplasmic" evidence="1">
    <location>
        <begin position="310"/>
        <end position="377"/>
    </location>
</feature>
<feature type="region of interest" description="Disordered" evidence="3">
    <location>
        <begin position="357"/>
        <end position="377"/>
    </location>
</feature>
<feature type="compositionally biased region" description="Basic and acidic residues" evidence="3">
    <location>
        <begin position="363"/>
        <end position="377"/>
    </location>
</feature>
<feature type="modified residue" description="N6-(retinylidene)lysine">
    <location>
        <position position="296"/>
    </location>
</feature>
<feature type="lipid moiety-binding region" description="S-palmitoyl cysteine" evidence="1">
    <location>
        <position position="315"/>
    </location>
</feature>
<feature type="lipid moiety-binding region" description="S-palmitoyl cysteine" evidence="1">
    <location>
        <position position="316"/>
    </location>
</feature>
<feature type="glycosylation site" description="N-linked (GlcNAc...) asparagine" evidence="1">
    <location>
        <position position="4"/>
    </location>
</feature>
<feature type="disulfide bond" evidence="2">
    <location>
        <begin position="106"/>
        <end position="183"/>
    </location>
</feature>
<feature type="splice variant" id="VSP_014041" description="In isoform 2." evidence="10">
    <original>S</original>
    <variation>V</variation>
    <location>
        <position position="353"/>
    </location>
</feature>
<feature type="splice variant" id="VSP_014042" description="In isoform 2." evidence="10">
    <location>
        <begin position="354"/>
        <end position="377"/>
    </location>
</feature>
<feature type="sequence conflict" description="In Ref. 1; AAP72135." evidence="11" ref="1">
    <location>
        <begin position="84"/>
        <end position="86"/>
    </location>
</feature>
<dbReference type="EMBL" id="AY288426">
    <property type="protein sequence ID" value="AAP72135.1"/>
    <property type="molecule type" value="mRNA"/>
</dbReference>
<dbReference type="EMBL" id="BC125611">
    <property type="protein sequence ID" value="AAI25612.1"/>
    <property type="molecule type" value="mRNA"/>
</dbReference>
<dbReference type="EMBL" id="BC132010">
    <property type="protein sequence ID" value="AAI32011.1"/>
    <property type="molecule type" value="mRNA"/>
</dbReference>
<dbReference type="EMBL" id="AY255592">
    <property type="protein sequence ID" value="AAO85104.1"/>
    <property type="molecule type" value="mRNA"/>
</dbReference>
<dbReference type="EMBL" id="AK039525">
    <property type="protein sequence ID" value="BAC30373.1"/>
    <property type="molecule type" value="mRNA"/>
</dbReference>
<dbReference type="EMBL" id="AY318865">
    <property type="protein sequence ID" value="AAR08201.1"/>
    <property type="molecule type" value="mRNA"/>
</dbReference>
<dbReference type="EMBL" id="BK001605">
    <property type="protein sequence ID" value="DAA01972.1"/>
    <property type="molecule type" value="Genomic_DNA"/>
</dbReference>
<dbReference type="CCDS" id="CCDS37619.1">
    <molecule id="Q6VZZ7-1"/>
</dbReference>
<dbReference type="RefSeq" id="NP_861418.2">
    <molecule id="Q6VZZ7-1"/>
    <property type="nucleotide sequence ID" value="NM_181753.4"/>
</dbReference>
<dbReference type="SMR" id="Q6VZZ7"/>
<dbReference type="FunCoup" id="Q6VZZ7">
    <property type="interactions" value="663"/>
</dbReference>
<dbReference type="STRING" id="10090.ENSMUSP00000063542"/>
<dbReference type="GlyCosmos" id="Q6VZZ7">
    <property type="glycosylation" value="1 site, No reported glycans"/>
</dbReference>
<dbReference type="GlyGen" id="Q6VZZ7">
    <property type="glycosylation" value="1 site"/>
</dbReference>
<dbReference type="PhosphoSitePlus" id="Q6VZZ7"/>
<dbReference type="PaxDb" id="10090-ENSMUSP00000063542"/>
<dbReference type="Antibodypedia" id="16965">
    <property type="antibodies" value="228 antibodies from 30 providers"/>
</dbReference>
<dbReference type="DNASU" id="353344"/>
<dbReference type="Ensembl" id="ENSMUST00000068355.8">
    <molecule id="Q6VZZ7-1"/>
    <property type="protein sequence ID" value="ENSMUSP00000063542.7"/>
    <property type="gene ID" value="ENSMUSG00000043972.9"/>
</dbReference>
<dbReference type="GeneID" id="353344"/>
<dbReference type="KEGG" id="mmu:353344"/>
<dbReference type="UCSC" id="uc008coq.1">
    <molecule id="Q6VZZ7-1"/>
    <property type="organism name" value="mouse"/>
</dbReference>
<dbReference type="AGR" id="MGI:2662912"/>
<dbReference type="CTD" id="221391"/>
<dbReference type="MGI" id="MGI:2662912">
    <property type="gene designation" value="Opn5"/>
</dbReference>
<dbReference type="VEuPathDB" id="HostDB:ENSMUSG00000043972"/>
<dbReference type="eggNOG" id="KOG3656">
    <property type="taxonomic scope" value="Eukaryota"/>
</dbReference>
<dbReference type="GeneTree" id="ENSGT01120000271854"/>
<dbReference type="HOGENOM" id="CLU_009579_3_0_1"/>
<dbReference type="InParanoid" id="Q6VZZ7"/>
<dbReference type="OMA" id="MENTTWP"/>
<dbReference type="OrthoDB" id="5564849at2759"/>
<dbReference type="PhylomeDB" id="Q6VZZ7"/>
<dbReference type="TreeFam" id="TF324998"/>
<dbReference type="Reactome" id="R-MMU-418594">
    <property type="pathway name" value="G alpha (i) signalling events"/>
</dbReference>
<dbReference type="Reactome" id="R-MMU-419771">
    <property type="pathway name" value="Opsins"/>
</dbReference>
<dbReference type="BioGRID-ORCS" id="353344">
    <property type="hits" value="2 hits in 75 CRISPR screens"/>
</dbReference>
<dbReference type="ChiTaRS" id="Opn5">
    <property type="organism name" value="mouse"/>
</dbReference>
<dbReference type="PRO" id="PR:Q6VZZ7"/>
<dbReference type="Proteomes" id="UP000000589">
    <property type="component" value="Chromosome 17"/>
</dbReference>
<dbReference type="RNAct" id="Q6VZZ7">
    <property type="molecule type" value="protein"/>
</dbReference>
<dbReference type="GO" id="GO:0005737">
    <property type="term" value="C:cytoplasm"/>
    <property type="evidence" value="ECO:0000250"/>
    <property type="project" value="UniProtKB"/>
</dbReference>
<dbReference type="GO" id="GO:0005886">
    <property type="term" value="C:plasma membrane"/>
    <property type="evidence" value="ECO:0000250"/>
    <property type="project" value="UniProtKB"/>
</dbReference>
<dbReference type="GO" id="GO:0005502">
    <property type="term" value="F:11-cis retinal binding"/>
    <property type="evidence" value="ECO:0000314"/>
    <property type="project" value="MGI"/>
</dbReference>
<dbReference type="GO" id="GO:0008020">
    <property type="term" value="F:G protein-coupled photoreceptor activity"/>
    <property type="evidence" value="ECO:0000315"/>
    <property type="project" value="UniProtKB"/>
</dbReference>
<dbReference type="GO" id="GO:0004930">
    <property type="term" value="F:G protein-coupled receptor activity"/>
    <property type="evidence" value="ECO:0000314"/>
    <property type="project" value="MGI"/>
</dbReference>
<dbReference type="GO" id="GO:0071482">
    <property type="term" value="P:cellular response to light stimulus"/>
    <property type="evidence" value="ECO:0000315"/>
    <property type="project" value="UniProtKB"/>
</dbReference>
<dbReference type="GO" id="GO:0071492">
    <property type="term" value="P:cellular response to UV-A"/>
    <property type="evidence" value="ECO:0007669"/>
    <property type="project" value="Ensembl"/>
</dbReference>
<dbReference type="GO" id="GO:0043153">
    <property type="term" value="P:entrainment of circadian clock by photoperiod"/>
    <property type="evidence" value="ECO:0000315"/>
    <property type="project" value="UniProtKB"/>
</dbReference>
<dbReference type="GO" id="GO:1990384">
    <property type="term" value="P:hyaloid vascular plexus regression"/>
    <property type="evidence" value="ECO:0000315"/>
    <property type="project" value="UniProtKB"/>
</dbReference>
<dbReference type="GO" id="GO:0007602">
    <property type="term" value="P:phototransduction"/>
    <property type="evidence" value="ECO:0000315"/>
    <property type="project" value="UniProtKB"/>
</dbReference>
<dbReference type="GO" id="GO:0007604">
    <property type="term" value="P:phototransduction, UV"/>
    <property type="evidence" value="ECO:0000315"/>
    <property type="project" value="UniProtKB"/>
</dbReference>
<dbReference type="GO" id="GO:0007601">
    <property type="term" value="P:visual perception"/>
    <property type="evidence" value="ECO:0007669"/>
    <property type="project" value="UniProtKB-KW"/>
</dbReference>
<dbReference type="CDD" id="cd15074">
    <property type="entry name" value="7tmA_Opsin5_neuropsin"/>
    <property type="match status" value="1"/>
</dbReference>
<dbReference type="FunFam" id="1.20.1070.10:FF:000104">
    <property type="entry name" value="Opsin 5"/>
    <property type="match status" value="1"/>
</dbReference>
<dbReference type="Gene3D" id="1.20.1070.10">
    <property type="entry name" value="Rhodopsin 7-helix transmembrane proteins"/>
    <property type="match status" value="1"/>
</dbReference>
<dbReference type="InterPro" id="IPR050125">
    <property type="entry name" value="GPCR_opsins"/>
</dbReference>
<dbReference type="InterPro" id="IPR000276">
    <property type="entry name" value="GPCR_Rhodpsn"/>
</dbReference>
<dbReference type="InterPro" id="IPR017452">
    <property type="entry name" value="GPCR_Rhodpsn_7TM"/>
</dbReference>
<dbReference type="InterPro" id="IPR002962">
    <property type="entry name" value="Peropsin"/>
</dbReference>
<dbReference type="InterPro" id="IPR027430">
    <property type="entry name" value="Retinal_BS"/>
</dbReference>
<dbReference type="PANTHER" id="PTHR24240">
    <property type="entry name" value="OPSIN"/>
    <property type="match status" value="1"/>
</dbReference>
<dbReference type="Pfam" id="PF00001">
    <property type="entry name" value="7tm_1"/>
    <property type="match status" value="1"/>
</dbReference>
<dbReference type="PRINTS" id="PR00237">
    <property type="entry name" value="GPCRRHODOPSN"/>
</dbReference>
<dbReference type="PRINTS" id="PR01244">
    <property type="entry name" value="PEROPSIN"/>
</dbReference>
<dbReference type="SUPFAM" id="SSF81321">
    <property type="entry name" value="Family A G protein-coupled receptor-like"/>
    <property type="match status" value="1"/>
</dbReference>
<dbReference type="PROSITE" id="PS00237">
    <property type="entry name" value="G_PROTEIN_RECEP_F1_1"/>
    <property type="match status" value="1"/>
</dbReference>
<dbReference type="PROSITE" id="PS50262">
    <property type="entry name" value="G_PROTEIN_RECEP_F1_2"/>
    <property type="match status" value="1"/>
</dbReference>
<dbReference type="PROSITE" id="PS00238">
    <property type="entry name" value="OPSIN"/>
    <property type="match status" value="1"/>
</dbReference>
<accession>Q6VZZ7</accession>
<accession>Q059L5</accession>
<accession>Q7TQP1</accession>
<accession>Q80T51</accession>
<accession>Q8BYI2</accession>